<gene>
    <name type="ordered locus">At5g58280</name>
    <name type="ORF">MCK7.15</name>
</gene>
<name>Y5828_ARATH</name>
<proteinExistence type="inferred from homology"/>
<sequence>MAMAYEEARKLRLQENHKRFQSNFVALPQFQLLQQRNHKPIDKALLATAEPRRSSRVRTVISSYRDDVVVDTGRTSNLRRSRHSSTWATYISRPLHECKFASYEEKVGAFKAAEKFQRSLKSPHPYFVKSMVRSHVYSCFWLGLPSRFCADNFPEETMEIELEDEEGEVYEAVYIGRRAGLSGGWKRFALDHKLDDGDALLFELVEPKKFKIYVFKGNENANLTSARKRGRATTPSEEEEEEEDKDVEESGDEEHSSRATKRSSVRLLRKRKA</sequence>
<evidence type="ECO:0000255" key="1">
    <source>
        <dbReference type="PROSITE-ProRule" id="PRU00326"/>
    </source>
</evidence>
<evidence type="ECO:0000256" key="2">
    <source>
        <dbReference type="SAM" id="MobiDB-lite"/>
    </source>
</evidence>
<accession>Q9FHB2</accession>
<keyword id="KW-0238">DNA-binding</keyword>
<keyword id="KW-0539">Nucleus</keyword>
<keyword id="KW-1185">Reference proteome</keyword>
<keyword id="KW-0804">Transcription</keyword>
<keyword id="KW-0805">Transcription regulation</keyword>
<comment type="subcellular location">
    <subcellularLocation>
        <location evidence="1">Nucleus</location>
    </subcellularLocation>
</comment>
<feature type="chain" id="PRO_0000375163" description="Putative B3 domain-containing protein At5g58280">
    <location>
        <begin position="1"/>
        <end position="273"/>
    </location>
</feature>
<feature type="DNA-binding region" description="TF-B3" evidence="1">
    <location>
        <begin position="127"/>
        <end position="218"/>
    </location>
</feature>
<feature type="region of interest" description="Disordered" evidence="2">
    <location>
        <begin position="225"/>
        <end position="273"/>
    </location>
</feature>
<feature type="compositionally biased region" description="Acidic residues" evidence="2">
    <location>
        <begin position="236"/>
        <end position="252"/>
    </location>
</feature>
<feature type="compositionally biased region" description="Basic residues" evidence="2">
    <location>
        <begin position="258"/>
        <end position="273"/>
    </location>
</feature>
<organism>
    <name type="scientific">Arabidopsis thaliana</name>
    <name type="common">Mouse-ear cress</name>
    <dbReference type="NCBI Taxonomy" id="3702"/>
    <lineage>
        <taxon>Eukaryota</taxon>
        <taxon>Viridiplantae</taxon>
        <taxon>Streptophyta</taxon>
        <taxon>Embryophyta</taxon>
        <taxon>Tracheophyta</taxon>
        <taxon>Spermatophyta</taxon>
        <taxon>Magnoliopsida</taxon>
        <taxon>eudicotyledons</taxon>
        <taxon>Gunneridae</taxon>
        <taxon>Pentapetalae</taxon>
        <taxon>rosids</taxon>
        <taxon>malvids</taxon>
        <taxon>Brassicales</taxon>
        <taxon>Brassicaceae</taxon>
        <taxon>Camelineae</taxon>
        <taxon>Arabidopsis</taxon>
    </lineage>
</organism>
<protein>
    <recommendedName>
        <fullName>Putative B3 domain-containing protein At5g58280</fullName>
    </recommendedName>
</protein>
<reference key="1">
    <citation type="journal article" date="2000" name="DNA Res.">
        <title>Structural analysis of Arabidopsis thaliana chromosome 5. X. Sequence features of the regions of 3,076,755 bp covered by sixty P1 and TAC clones.</title>
        <authorList>
            <person name="Sato S."/>
            <person name="Nakamura Y."/>
            <person name="Kaneko T."/>
            <person name="Katoh T."/>
            <person name="Asamizu E."/>
            <person name="Kotani H."/>
            <person name="Tabata S."/>
        </authorList>
    </citation>
    <scope>NUCLEOTIDE SEQUENCE [LARGE SCALE GENOMIC DNA]</scope>
    <source>
        <strain>cv. Columbia</strain>
    </source>
</reference>
<reference key="2">
    <citation type="journal article" date="2017" name="Plant J.">
        <title>Araport11: a complete reannotation of the Arabidopsis thaliana reference genome.</title>
        <authorList>
            <person name="Cheng C.Y."/>
            <person name="Krishnakumar V."/>
            <person name="Chan A.P."/>
            <person name="Thibaud-Nissen F."/>
            <person name="Schobel S."/>
            <person name="Town C.D."/>
        </authorList>
    </citation>
    <scope>GENOME REANNOTATION</scope>
    <source>
        <strain>cv. Columbia</strain>
    </source>
</reference>
<reference key="3">
    <citation type="journal article" date="2008" name="Trends Plant Sci.">
        <title>The plant B3 superfamily.</title>
        <authorList>
            <person name="Swaminathan K."/>
            <person name="Peterson K."/>
            <person name="Jack T."/>
        </authorList>
    </citation>
    <scope>GENE FAMILY</scope>
</reference>
<dbReference type="EMBL" id="AB019228">
    <property type="protein sequence ID" value="BAA96919.2"/>
    <property type="molecule type" value="Genomic_DNA"/>
</dbReference>
<dbReference type="EMBL" id="CP002688">
    <property type="protein sequence ID" value="AED97028.1"/>
    <property type="molecule type" value="Genomic_DNA"/>
</dbReference>
<dbReference type="RefSeq" id="NP_200636.1">
    <property type="nucleotide sequence ID" value="NM_125213.2"/>
</dbReference>
<dbReference type="SMR" id="Q9FHB2"/>
<dbReference type="FunCoup" id="Q9FHB2">
    <property type="interactions" value="88"/>
</dbReference>
<dbReference type="STRING" id="3702.Q9FHB2"/>
<dbReference type="PaxDb" id="3702-AT5G58280.1"/>
<dbReference type="EnsemblPlants" id="AT5G58280.1">
    <property type="protein sequence ID" value="AT5G58280.1"/>
    <property type="gene ID" value="AT5G58280"/>
</dbReference>
<dbReference type="GeneID" id="835940"/>
<dbReference type="Gramene" id="AT5G58280.1">
    <property type="protein sequence ID" value="AT5G58280.1"/>
    <property type="gene ID" value="AT5G58280"/>
</dbReference>
<dbReference type="KEGG" id="ath:AT5G58280"/>
<dbReference type="Araport" id="AT5G58280"/>
<dbReference type="TAIR" id="AT5G58280"/>
<dbReference type="eggNOG" id="KOG1216">
    <property type="taxonomic scope" value="Eukaryota"/>
</dbReference>
<dbReference type="HOGENOM" id="CLU_058918_0_0_1"/>
<dbReference type="InParanoid" id="Q9FHB2"/>
<dbReference type="OMA" id="HRTCNIT"/>
<dbReference type="PhylomeDB" id="Q9FHB2"/>
<dbReference type="PRO" id="PR:Q9FHB2"/>
<dbReference type="Proteomes" id="UP000006548">
    <property type="component" value="Chromosome 5"/>
</dbReference>
<dbReference type="ExpressionAtlas" id="Q9FHB2">
    <property type="expression patterns" value="baseline and differential"/>
</dbReference>
<dbReference type="GO" id="GO:0005634">
    <property type="term" value="C:nucleus"/>
    <property type="evidence" value="ECO:0007669"/>
    <property type="project" value="UniProtKB-SubCell"/>
</dbReference>
<dbReference type="GO" id="GO:0003677">
    <property type="term" value="F:DNA binding"/>
    <property type="evidence" value="ECO:0007669"/>
    <property type="project" value="UniProtKB-KW"/>
</dbReference>
<dbReference type="CDD" id="cd10017">
    <property type="entry name" value="B3_DNA"/>
    <property type="match status" value="1"/>
</dbReference>
<dbReference type="Gene3D" id="2.40.330.10">
    <property type="entry name" value="DNA-binding pseudobarrel domain"/>
    <property type="match status" value="1"/>
</dbReference>
<dbReference type="InterPro" id="IPR003340">
    <property type="entry name" value="B3_DNA-bd"/>
</dbReference>
<dbReference type="InterPro" id="IPR015300">
    <property type="entry name" value="DNA-bd_pseudobarrel_sf"/>
</dbReference>
<dbReference type="InterPro" id="IPR044837">
    <property type="entry name" value="REM16-like"/>
</dbReference>
<dbReference type="PANTHER" id="PTHR31391:SF3">
    <property type="entry name" value="B3 DOMAIN-CONTAINING PROTEIN OS05G0481400"/>
    <property type="match status" value="1"/>
</dbReference>
<dbReference type="PANTHER" id="PTHR31391">
    <property type="entry name" value="B3 DOMAIN-CONTAINING PROTEIN OS11G0197600-RELATED"/>
    <property type="match status" value="1"/>
</dbReference>
<dbReference type="Pfam" id="PF02362">
    <property type="entry name" value="B3"/>
    <property type="match status" value="1"/>
</dbReference>
<dbReference type="SMART" id="SM01019">
    <property type="entry name" value="B3"/>
    <property type="match status" value="1"/>
</dbReference>
<dbReference type="SUPFAM" id="SSF101936">
    <property type="entry name" value="DNA-binding pseudobarrel domain"/>
    <property type="match status" value="1"/>
</dbReference>
<dbReference type="PROSITE" id="PS50863">
    <property type="entry name" value="B3"/>
    <property type="match status" value="1"/>
</dbReference>